<accession>Q1JHJ6</accession>
<gene>
    <name evidence="1" type="primary">rpmI</name>
    <name type="ordered locus">MGAS10270_Spy0675</name>
</gene>
<reference key="1">
    <citation type="journal article" date="2006" name="Proc. Natl. Acad. Sci. U.S.A.">
        <title>Molecular genetic anatomy of inter- and intraserotype variation in the human bacterial pathogen group A Streptococcus.</title>
        <authorList>
            <person name="Beres S.B."/>
            <person name="Richter E.W."/>
            <person name="Nagiec M.J."/>
            <person name="Sumby P."/>
            <person name="Porcella S.F."/>
            <person name="DeLeo F.R."/>
            <person name="Musser J.M."/>
        </authorList>
    </citation>
    <scope>NUCLEOTIDE SEQUENCE [LARGE SCALE GENOMIC DNA]</scope>
    <source>
        <strain>MGAS10270</strain>
    </source>
</reference>
<keyword id="KW-0687">Ribonucleoprotein</keyword>
<keyword id="KW-0689">Ribosomal protein</keyword>
<comment type="similarity">
    <text evidence="1">Belongs to the bacterial ribosomal protein bL35 family.</text>
</comment>
<organism>
    <name type="scientific">Streptococcus pyogenes serotype M2 (strain MGAS10270)</name>
    <dbReference type="NCBI Taxonomy" id="370552"/>
    <lineage>
        <taxon>Bacteria</taxon>
        <taxon>Bacillati</taxon>
        <taxon>Bacillota</taxon>
        <taxon>Bacilli</taxon>
        <taxon>Lactobacillales</taxon>
        <taxon>Streptococcaceae</taxon>
        <taxon>Streptococcus</taxon>
    </lineage>
</organism>
<protein>
    <recommendedName>
        <fullName evidence="1">Large ribosomal subunit protein bL35</fullName>
    </recommendedName>
    <alternativeName>
        <fullName evidence="3">50S ribosomal protein L35</fullName>
    </alternativeName>
</protein>
<name>RL35_STRPD</name>
<evidence type="ECO:0000255" key="1">
    <source>
        <dbReference type="HAMAP-Rule" id="MF_00514"/>
    </source>
</evidence>
<evidence type="ECO:0000256" key="2">
    <source>
        <dbReference type="SAM" id="MobiDB-lite"/>
    </source>
</evidence>
<evidence type="ECO:0000305" key="3"/>
<feature type="chain" id="PRO_0000258764" description="Large ribosomal subunit protein bL35">
    <location>
        <begin position="1"/>
        <end position="65"/>
    </location>
</feature>
<feature type="region of interest" description="Disordered" evidence="2">
    <location>
        <begin position="1"/>
        <end position="20"/>
    </location>
</feature>
<feature type="compositionally biased region" description="Basic residues" evidence="2">
    <location>
        <begin position="1"/>
        <end position="16"/>
    </location>
</feature>
<sequence>MPKQKTHRASAKRFKRTGSGGLKRFRAFTSHRFHGKTKKQRRHLRKAGLVSSGDFKRIKAMVTGL</sequence>
<proteinExistence type="inferred from homology"/>
<dbReference type="EMBL" id="CP000260">
    <property type="protein sequence ID" value="ABF33740.1"/>
    <property type="molecule type" value="Genomic_DNA"/>
</dbReference>
<dbReference type="RefSeq" id="WP_002985151.1">
    <property type="nucleotide sequence ID" value="NZ_CVUH01000002.1"/>
</dbReference>
<dbReference type="SMR" id="Q1JHJ6"/>
<dbReference type="GeneID" id="83690415"/>
<dbReference type="KEGG" id="sph:MGAS10270_Spy0675"/>
<dbReference type="HOGENOM" id="CLU_169643_3_1_9"/>
<dbReference type="Proteomes" id="UP000002436">
    <property type="component" value="Chromosome"/>
</dbReference>
<dbReference type="GO" id="GO:0022625">
    <property type="term" value="C:cytosolic large ribosomal subunit"/>
    <property type="evidence" value="ECO:0007669"/>
    <property type="project" value="TreeGrafter"/>
</dbReference>
<dbReference type="GO" id="GO:0003735">
    <property type="term" value="F:structural constituent of ribosome"/>
    <property type="evidence" value="ECO:0007669"/>
    <property type="project" value="InterPro"/>
</dbReference>
<dbReference type="GO" id="GO:0006412">
    <property type="term" value="P:translation"/>
    <property type="evidence" value="ECO:0007669"/>
    <property type="project" value="UniProtKB-UniRule"/>
</dbReference>
<dbReference type="FunFam" id="4.10.410.60:FF:000001">
    <property type="entry name" value="50S ribosomal protein L35"/>
    <property type="match status" value="1"/>
</dbReference>
<dbReference type="Gene3D" id="4.10.410.60">
    <property type="match status" value="1"/>
</dbReference>
<dbReference type="HAMAP" id="MF_00514">
    <property type="entry name" value="Ribosomal_bL35"/>
    <property type="match status" value="1"/>
</dbReference>
<dbReference type="InterPro" id="IPR001706">
    <property type="entry name" value="Ribosomal_bL35"/>
</dbReference>
<dbReference type="InterPro" id="IPR021137">
    <property type="entry name" value="Ribosomal_bL35-like"/>
</dbReference>
<dbReference type="InterPro" id="IPR018265">
    <property type="entry name" value="Ribosomal_bL35_CS"/>
</dbReference>
<dbReference type="InterPro" id="IPR037229">
    <property type="entry name" value="Ribosomal_bL35_sf"/>
</dbReference>
<dbReference type="NCBIfam" id="TIGR00001">
    <property type="entry name" value="rpmI_bact"/>
    <property type="match status" value="1"/>
</dbReference>
<dbReference type="PANTHER" id="PTHR33343">
    <property type="entry name" value="54S RIBOSOMAL PROTEIN BL35M"/>
    <property type="match status" value="1"/>
</dbReference>
<dbReference type="PANTHER" id="PTHR33343:SF1">
    <property type="entry name" value="LARGE RIBOSOMAL SUBUNIT PROTEIN BL35M"/>
    <property type="match status" value="1"/>
</dbReference>
<dbReference type="Pfam" id="PF01632">
    <property type="entry name" value="Ribosomal_L35p"/>
    <property type="match status" value="1"/>
</dbReference>
<dbReference type="PRINTS" id="PR00064">
    <property type="entry name" value="RIBOSOMALL35"/>
</dbReference>
<dbReference type="SUPFAM" id="SSF143034">
    <property type="entry name" value="L35p-like"/>
    <property type="match status" value="1"/>
</dbReference>
<dbReference type="PROSITE" id="PS00936">
    <property type="entry name" value="RIBOSOMAL_L35"/>
    <property type="match status" value="1"/>
</dbReference>